<dbReference type="EC" id="2.1.1.172" evidence="1"/>
<dbReference type="EMBL" id="CP000712">
    <property type="protein sequence ID" value="ABQ76953.1"/>
    <property type="molecule type" value="Genomic_DNA"/>
</dbReference>
<dbReference type="SMR" id="A5VYJ3"/>
<dbReference type="KEGG" id="ppf:Pput_0789"/>
<dbReference type="eggNOG" id="COG2813">
    <property type="taxonomic scope" value="Bacteria"/>
</dbReference>
<dbReference type="HOGENOM" id="CLU_049581_0_0_6"/>
<dbReference type="GO" id="GO:0005737">
    <property type="term" value="C:cytoplasm"/>
    <property type="evidence" value="ECO:0007669"/>
    <property type="project" value="UniProtKB-SubCell"/>
</dbReference>
<dbReference type="GO" id="GO:0052914">
    <property type="term" value="F:16S rRNA (guanine(1207)-N(2))-methyltransferase activity"/>
    <property type="evidence" value="ECO:0007669"/>
    <property type="project" value="UniProtKB-EC"/>
</dbReference>
<dbReference type="GO" id="GO:0003676">
    <property type="term" value="F:nucleic acid binding"/>
    <property type="evidence" value="ECO:0007669"/>
    <property type="project" value="InterPro"/>
</dbReference>
<dbReference type="CDD" id="cd02440">
    <property type="entry name" value="AdoMet_MTases"/>
    <property type="match status" value="1"/>
</dbReference>
<dbReference type="Gene3D" id="3.40.50.150">
    <property type="entry name" value="Vaccinia Virus protein VP39"/>
    <property type="match status" value="2"/>
</dbReference>
<dbReference type="HAMAP" id="MF_01862">
    <property type="entry name" value="16SrRNA_methyltr_C"/>
    <property type="match status" value="1"/>
</dbReference>
<dbReference type="InterPro" id="IPR002052">
    <property type="entry name" value="DNA_methylase_N6_adenine_CS"/>
</dbReference>
<dbReference type="InterPro" id="IPR013675">
    <property type="entry name" value="Mtase_sm_N"/>
</dbReference>
<dbReference type="InterPro" id="IPR023543">
    <property type="entry name" value="rRNA_ssu_MeTfrase_C"/>
</dbReference>
<dbReference type="InterPro" id="IPR046977">
    <property type="entry name" value="RsmC/RlmG"/>
</dbReference>
<dbReference type="InterPro" id="IPR029063">
    <property type="entry name" value="SAM-dependent_MTases_sf"/>
</dbReference>
<dbReference type="InterPro" id="IPR007848">
    <property type="entry name" value="Small_mtfrase_dom"/>
</dbReference>
<dbReference type="PANTHER" id="PTHR47816">
    <property type="entry name" value="RIBOSOMAL RNA SMALL SUBUNIT METHYLTRANSFERASE C"/>
    <property type="match status" value="1"/>
</dbReference>
<dbReference type="PANTHER" id="PTHR47816:SF4">
    <property type="entry name" value="RIBOSOMAL RNA SMALL SUBUNIT METHYLTRANSFERASE C"/>
    <property type="match status" value="1"/>
</dbReference>
<dbReference type="Pfam" id="PF05175">
    <property type="entry name" value="MTS"/>
    <property type="match status" value="1"/>
</dbReference>
<dbReference type="Pfam" id="PF08468">
    <property type="entry name" value="MTS_N"/>
    <property type="match status" value="1"/>
</dbReference>
<dbReference type="SUPFAM" id="SSF53335">
    <property type="entry name" value="S-adenosyl-L-methionine-dependent methyltransferases"/>
    <property type="match status" value="1"/>
</dbReference>
<evidence type="ECO:0000255" key="1">
    <source>
        <dbReference type="HAMAP-Rule" id="MF_01862"/>
    </source>
</evidence>
<comment type="function">
    <text evidence="1">Specifically methylates the guanine in position 1207 of 16S rRNA in the 30S particle.</text>
</comment>
<comment type="catalytic activity">
    <reaction evidence="1">
        <text>guanosine(1207) in 16S rRNA + S-adenosyl-L-methionine = N(2)-methylguanosine(1207) in 16S rRNA + S-adenosyl-L-homocysteine + H(+)</text>
        <dbReference type="Rhea" id="RHEA:42736"/>
        <dbReference type="Rhea" id="RHEA-COMP:10213"/>
        <dbReference type="Rhea" id="RHEA-COMP:10214"/>
        <dbReference type="ChEBI" id="CHEBI:15378"/>
        <dbReference type="ChEBI" id="CHEBI:57856"/>
        <dbReference type="ChEBI" id="CHEBI:59789"/>
        <dbReference type="ChEBI" id="CHEBI:74269"/>
        <dbReference type="ChEBI" id="CHEBI:74481"/>
        <dbReference type="EC" id="2.1.1.172"/>
    </reaction>
</comment>
<comment type="subunit">
    <text evidence="1">Monomer.</text>
</comment>
<comment type="subcellular location">
    <subcellularLocation>
        <location evidence="1">Cytoplasm</location>
    </subcellularLocation>
</comment>
<comment type="similarity">
    <text evidence="1">Belongs to the methyltransferase superfamily. RsmC family.</text>
</comment>
<name>RSMC_PSEP1</name>
<feature type="chain" id="PRO_0000369742" description="Ribosomal RNA small subunit methyltransferase C">
    <location>
        <begin position="1"/>
        <end position="332"/>
    </location>
</feature>
<accession>A5VYJ3</accession>
<proteinExistence type="inferred from homology"/>
<reference key="1">
    <citation type="submission" date="2007-05" db="EMBL/GenBank/DDBJ databases">
        <title>Complete sequence of Pseudomonas putida F1.</title>
        <authorList>
            <consortium name="US DOE Joint Genome Institute"/>
            <person name="Copeland A."/>
            <person name="Lucas S."/>
            <person name="Lapidus A."/>
            <person name="Barry K."/>
            <person name="Detter J.C."/>
            <person name="Glavina del Rio T."/>
            <person name="Hammon N."/>
            <person name="Israni S."/>
            <person name="Dalin E."/>
            <person name="Tice H."/>
            <person name="Pitluck S."/>
            <person name="Chain P."/>
            <person name="Malfatti S."/>
            <person name="Shin M."/>
            <person name="Vergez L."/>
            <person name="Schmutz J."/>
            <person name="Larimer F."/>
            <person name="Land M."/>
            <person name="Hauser L."/>
            <person name="Kyrpides N."/>
            <person name="Lykidis A."/>
            <person name="Parales R."/>
            <person name="Richardson P."/>
        </authorList>
    </citation>
    <scope>NUCLEOTIDE SEQUENCE [LARGE SCALE GENOMIC DNA]</scope>
    <source>
        <strain>ATCC 700007 / DSM 6899 / JCM 31910 / BCRC 17059 / LMG 24140 / F1</strain>
    </source>
</reference>
<sequence>MDPRSEVLLRQAELFQGPLLIAGAPADDLLGQLPQAQAWTWHAGDQAMLESRFAGRSHYGVEAPEAAFESAVLFLPKSRELAAYLLNTLASRLAGRELYLVGEKRGGIEGAAKQLAAFGKPRKLDSARHCQLWQVTIDQAPQAKPLESLAERFELALEDGPLQVVSLPGVFSHGRLDRGTALLLKHLDGLPGGHMLDFGCGAGVLGATLKRRYPQSRVTLLDVDAFAVAASRLTLAANGLEGEVISGDGIDAAPTELSLILSNPPFHTGVHTNYQASENLLKKSAVHLRKGGEMRLVANSFLRYQPLIEGALGNCQVRDEADGFRIYQATRG</sequence>
<protein>
    <recommendedName>
        <fullName evidence="1">Ribosomal RNA small subunit methyltransferase C</fullName>
        <ecNumber evidence="1">2.1.1.172</ecNumber>
    </recommendedName>
    <alternativeName>
        <fullName evidence="1">16S rRNA m2G1207 methyltransferase</fullName>
    </alternativeName>
    <alternativeName>
        <fullName evidence="1">rRNA (guanine-N(2)-)-methyltransferase RsmC</fullName>
    </alternativeName>
</protein>
<gene>
    <name evidence="1" type="primary">rsmC</name>
    <name type="ordered locus">Pput_0789</name>
</gene>
<organism>
    <name type="scientific">Pseudomonas putida (strain ATCC 700007 / DSM 6899 / JCM 31910 / BCRC 17059 / LMG 24140 / F1)</name>
    <dbReference type="NCBI Taxonomy" id="351746"/>
    <lineage>
        <taxon>Bacteria</taxon>
        <taxon>Pseudomonadati</taxon>
        <taxon>Pseudomonadota</taxon>
        <taxon>Gammaproteobacteria</taxon>
        <taxon>Pseudomonadales</taxon>
        <taxon>Pseudomonadaceae</taxon>
        <taxon>Pseudomonas</taxon>
    </lineage>
</organism>
<keyword id="KW-0963">Cytoplasm</keyword>
<keyword id="KW-0489">Methyltransferase</keyword>
<keyword id="KW-0698">rRNA processing</keyword>
<keyword id="KW-0949">S-adenosyl-L-methionine</keyword>
<keyword id="KW-0808">Transferase</keyword>